<evidence type="ECO:0000255" key="1">
    <source>
        <dbReference type="HAMAP-Rule" id="MF_00387"/>
    </source>
</evidence>
<protein>
    <recommendedName>
        <fullName evidence="1">Acyl-[acyl-carrier-protein]--UDP-N-acetylglucosamine O-acyltransferase</fullName>
        <shortName evidence="1">UDP-N-acetylglucosamine acyltransferase</shortName>
        <ecNumber evidence="1">2.3.1.129</ecNumber>
    </recommendedName>
</protein>
<feature type="chain" id="PRO_1000205792" description="Acyl-[acyl-carrier-protein]--UDP-N-acetylglucosamine O-acyltransferase">
    <location>
        <begin position="1"/>
        <end position="258"/>
    </location>
</feature>
<organism>
    <name type="scientific">Azotobacter vinelandii (strain DJ / ATCC BAA-1303)</name>
    <dbReference type="NCBI Taxonomy" id="322710"/>
    <lineage>
        <taxon>Bacteria</taxon>
        <taxon>Pseudomonadati</taxon>
        <taxon>Pseudomonadota</taxon>
        <taxon>Gammaproteobacteria</taxon>
        <taxon>Pseudomonadales</taxon>
        <taxon>Pseudomonadaceae</taxon>
        <taxon>Azotobacter</taxon>
    </lineage>
</organism>
<comment type="function">
    <text evidence="1">Involved in the biosynthesis of lipid A, a phosphorylated glycolipid that anchors the lipopolysaccharide to the outer membrane of the cell.</text>
</comment>
<comment type="catalytic activity">
    <reaction evidence="1">
        <text>a (3R)-hydroxyacyl-[ACP] + UDP-N-acetyl-alpha-D-glucosamine = a UDP-3-O-[(3R)-3-hydroxyacyl]-N-acetyl-alpha-D-glucosamine + holo-[ACP]</text>
        <dbReference type="Rhea" id="RHEA:67812"/>
        <dbReference type="Rhea" id="RHEA-COMP:9685"/>
        <dbReference type="Rhea" id="RHEA-COMP:9945"/>
        <dbReference type="ChEBI" id="CHEBI:57705"/>
        <dbReference type="ChEBI" id="CHEBI:64479"/>
        <dbReference type="ChEBI" id="CHEBI:78827"/>
        <dbReference type="ChEBI" id="CHEBI:173225"/>
        <dbReference type="EC" id="2.3.1.129"/>
    </reaction>
</comment>
<comment type="pathway">
    <text evidence="1">Glycolipid biosynthesis; lipid IV(A) biosynthesis; lipid IV(A) from (3R)-3-hydroxytetradecanoyl-[acyl-carrier-protein] and UDP-N-acetyl-alpha-D-glucosamine: step 1/6.</text>
</comment>
<comment type="subunit">
    <text evidence="1">Homotrimer.</text>
</comment>
<comment type="subcellular location">
    <subcellularLocation>
        <location evidence="1">Cytoplasm</location>
    </subcellularLocation>
</comment>
<comment type="similarity">
    <text evidence="1">Belongs to the transferase hexapeptide repeat family. LpxA subfamily.</text>
</comment>
<accession>C1DST4</accession>
<dbReference type="EC" id="2.3.1.129" evidence="1"/>
<dbReference type="EMBL" id="CP001157">
    <property type="protein sequence ID" value="ACO80027.1"/>
    <property type="molecule type" value="Genomic_DNA"/>
</dbReference>
<dbReference type="RefSeq" id="WP_012702402.1">
    <property type="nucleotide sequence ID" value="NC_012560.1"/>
</dbReference>
<dbReference type="SMR" id="C1DST4"/>
<dbReference type="STRING" id="322710.Avin_38870"/>
<dbReference type="EnsemblBacteria" id="ACO80027">
    <property type="protein sequence ID" value="ACO80027"/>
    <property type="gene ID" value="Avin_38870"/>
</dbReference>
<dbReference type="GeneID" id="88186845"/>
<dbReference type="KEGG" id="avn:Avin_38870"/>
<dbReference type="eggNOG" id="COG1043">
    <property type="taxonomic scope" value="Bacteria"/>
</dbReference>
<dbReference type="HOGENOM" id="CLU_061249_0_0_6"/>
<dbReference type="OrthoDB" id="9807278at2"/>
<dbReference type="UniPathway" id="UPA00359">
    <property type="reaction ID" value="UER00477"/>
</dbReference>
<dbReference type="Proteomes" id="UP000002424">
    <property type="component" value="Chromosome"/>
</dbReference>
<dbReference type="GO" id="GO:0005737">
    <property type="term" value="C:cytoplasm"/>
    <property type="evidence" value="ECO:0007669"/>
    <property type="project" value="UniProtKB-SubCell"/>
</dbReference>
<dbReference type="GO" id="GO:0016020">
    <property type="term" value="C:membrane"/>
    <property type="evidence" value="ECO:0007669"/>
    <property type="project" value="GOC"/>
</dbReference>
<dbReference type="GO" id="GO:0008780">
    <property type="term" value="F:acyl-[acyl-carrier-protein]-UDP-N-acetylglucosamine O-acyltransferase activity"/>
    <property type="evidence" value="ECO:0007669"/>
    <property type="project" value="UniProtKB-UniRule"/>
</dbReference>
<dbReference type="GO" id="GO:0009245">
    <property type="term" value="P:lipid A biosynthetic process"/>
    <property type="evidence" value="ECO:0007669"/>
    <property type="project" value="UniProtKB-UniRule"/>
</dbReference>
<dbReference type="CDD" id="cd03351">
    <property type="entry name" value="LbH_UDP-GlcNAc_AT"/>
    <property type="match status" value="1"/>
</dbReference>
<dbReference type="FunFam" id="2.160.10.10:FF:000003">
    <property type="entry name" value="Acyl-[acyl-carrier-protein]--UDP-N-acetylglucosamine O-acyltransferase"/>
    <property type="match status" value="1"/>
</dbReference>
<dbReference type="Gene3D" id="2.160.10.10">
    <property type="entry name" value="Hexapeptide repeat proteins"/>
    <property type="match status" value="1"/>
</dbReference>
<dbReference type="Gene3D" id="1.20.1180.10">
    <property type="entry name" value="Udp N-acetylglucosamine O-acyltransferase, C-terminal domain"/>
    <property type="match status" value="1"/>
</dbReference>
<dbReference type="HAMAP" id="MF_00387">
    <property type="entry name" value="LpxA"/>
    <property type="match status" value="1"/>
</dbReference>
<dbReference type="InterPro" id="IPR029098">
    <property type="entry name" value="Acetyltransf_C"/>
</dbReference>
<dbReference type="InterPro" id="IPR037157">
    <property type="entry name" value="Acetyltransf_C_sf"/>
</dbReference>
<dbReference type="InterPro" id="IPR001451">
    <property type="entry name" value="Hexapep"/>
</dbReference>
<dbReference type="InterPro" id="IPR018357">
    <property type="entry name" value="Hexapep_transf_CS"/>
</dbReference>
<dbReference type="InterPro" id="IPR010137">
    <property type="entry name" value="Lipid_A_LpxA"/>
</dbReference>
<dbReference type="InterPro" id="IPR011004">
    <property type="entry name" value="Trimer_LpxA-like_sf"/>
</dbReference>
<dbReference type="NCBIfam" id="TIGR01852">
    <property type="entry name" value="lipid_A_lpxA"/>
    <property type="match status" value="1"/>
</dbReference>
<dbReference type="NCBIfam" id="NF003657">
    <property type="entry name" value="PRK05289.1"/>
    <property type="match status" value="1"/>
</dbReference>
<dbReference type="PANTHER" id="PTHR43480">
    <property type="entry name" value="ACYL-[ACYL-CARRIER-PROTEIN]--UDP-N-ACETYLGLUCOSAMINE O-ACYLTRANSFERASE"/>
    <property type="match status" value="1"/>
</dbReference>
<dbReference type="PANTHER" id="PTHR43480:SF1">
    <property type="entry name" value="ACYL-[ACYL-CARRIER-PROTEIN]--UDP-N-ACETYLGLUCOSAMINE O-ACYLTRANSFERASE, MITOCHONDRIAL-RELATED"/>
    <property type="match status" value="1"/>
</dbReference>
<dbReference type="Pfam" id="PF13720">
    <property type="entry name" value="Acetyltransf_11"/>
    <property type="match status" value="1"/>
</dbReference>
<dbReference type="Pfam" id="PF00132">
    <property type="entry name" value="Hexapep"/>
    <property type="match status" value="1"/>
</dbReference>
<dbReference type="PIRSF" id="PIRSF000456">
    <property type="entry name" value="UDP-GlcNAc_acltr"/>
    <property type="match status" value="1"/>
</dbReference>
<dbReference type="SUPFAM" id="SSF51161">
    <property type="entry name" value="Trimeric LpxA-like enzymes"/>
    <property type="match status" value="1"/>
</dbReference>
<dbReference type="PROSITE" id="PS00101">
    <property type="entry name" value="HEXAPEP_TRANSFERASES"/>
    <property type="match status" value="1"/>
</dbReference>
<sequence length="258" mass="28245">MSLIDPRAIIDPSATLAPDVRVGPWTLIGPHVHIGEGTEIGPHVIVRGPTWIGRHNRIFQFSTIGEDTPDLKYKGEPTRLVIGDHNVIREGVTIHRGTVQDRSETTIGDHNLIMAYVHIGHDSVMGSHCILVNNASLAGHVHVGDWAILSGYTLIHQHCQIGAHSFVGMGSGVSKDVPAFVTVLGSPAQARSMNFEGMRRRGFSPEAMNALRRAYKVVYRQGLTVEQALVELEESAKQFPEVAIFRDSVRASTRGITR</sequence>
<gene>
    <name evidence="1" type="primary">lpxA</name>
    <name type="ordered locus">Avin_38870</name>
</gene>
<keyword id="KW-0012">Acyltransferase</keyword>
<keyword id="KW-0963">Cytoplasm</keyword>
<keyword id="KW-0441">Lipid A biosynthesis</keyword>
<keyword id="KW-0444">Lipid biosynthesis</keyword>
<keyword id="KW-0443">Lipid metabolism</keyword>
<keyword id="KW-0677">Repeat</keyword>
<keyword id="KW-0808">Transferase</keyword>
<reference key="1">
    <citation type="journal article" date="2009" name="J. Bacteriol.">
        <title>Genome sequence of Azotobacter vinelandii, an obligate aerobe specialized to support diverse anaerobic metabolic processes.</title>
        <authorList>
            <person name="Setubal J.C."/>
            <person name="Dos Santos P."/>
            <person name="Goldman B.S."/>
            <person name="Ertesvaag H."/>
            <person name="Espin G."/>
            <person name="Rubio L.M."/>
            <person name="Valla S."/>
            <person name="Almeida N.F."/>
            <person name="Balasubramanian D."/>
            <person name="Cromes L."/>
            <person name="Curatti L."/>
            <person name="Du Z."/>
            <person name="Godsy E."/>
            <person name="Goodner B."/>
            <person name="Hellner-Burris K."/>
            <person name="Hernandez J.A."/>
            <person name="Houmiel K."/>
            <person name="Imperial J."/>
            <person name="Kennedy C."/>
            <person name="Larson T.J."/>
            <person name="Latreille P."/>
            <person name="Ligon L.S."/>
            <person name="Lu J."/>
            <person name="Maerk M."/>
            <person name="Miller N.M."/>
            <person name="Norton S."/>
            <person name="O'Carroll I.P."/>
            <person name="Paulsen I."/>
            <person name="Raulfs E.C."/>
            <person name="Roemer R."/>
            <person name="Rosser J."/>
            <person name="Segura D."/>
            <person name="Slater S."/>
            <person name="Stricklin S.L."/>
            <person name="Studholme D.J."/>
            <person name="Sun J."/>
            <person name="Viana C.J."/>
            <person name="Wallin E."/>
            <person name="Wang B."/>
            <person name="Wheeler C."/>
            <person name="Zhu H."/>
            <person name="Dean D.R."/>
            <person name="Dixon R."/>
            <person name="Wood D."/>
        </authorList>
    </citation>
    <scope>NUCLEOTIDE SEQUENCE [LARGE SCALE GENOMIC DNA]</scope>
    <source>
        <strain>DJ / ATCC BAA-1303</strain>
    </source>
</reference>
<name>LPXA_AZOVD</name>
<proteinExistence type="inferred from homology"/>